<comment type="function">
    <text evidence="1">Condenses 4-methyl-5-(beta-hydroxyethyl)thiazole monophosphate (THZ-P) and 2-methyl-4-amino-5-hydroxymethyl pyrimidine pyrophosphate (HMP-PP) to form thiamine monophosphate (TMP).</text>
</comment>
<comment type="catalytic activity">
    <reaction>
        <text>2-[(2R,5Z)-2-carboxy-4-methylthiazol-5(2H)-ylidene]ethyl phosphate + 4-amino-2-methyl-5-(diphosphooxymethyl)pyrimidine + 2 H(+) = thiamine phosphate + CO2 + diphosphate</text>
        <dbReference type="Rhea" id="RHEA:47844"/>
        <dbReference type="ChEBI" id="CHEBI:15378"/>
        <dbReference type="ChEBI" id="CHEBI:16526"/>
        <dbReference type="ChEBI" id="CHEBI:33019"/>
        <dbReference type="ChEBI" id="CHEBI:37575"/>
        <dbReference type="ChEBI" id="CHEBI:57841"/>
        <dbReference type="ChEBI" id="CHEBI:62899"/>
        <dbReference type="EC" id="2.5.1.3"/>
    </reaction>
</comment>
<comment type="catalytic activity">
    <reaction>
        <text>2-(2-carboxy-4-methylthiazol-5-yl)ethyl phosphate + 4-amino-2-methyl-5-(diphosphooxymethyl)pyrimidine + 2 H(+) = thiamine phosphate + CO2 + diphosphate</text>
        <dbReference type="Rhea" id="RHEA:47848"/>
        <dbReference type="ChEBI" id="CHEBI:15378"/>
        <dbReference type="ChEBI" id="CHEBI:16526"/>
        <dbReference type="ChEBI" id="CHEBI:33019"/>
        <dbReference type="ChEBI" id="CHEBI:37575"/>
        <dbReference type="ChEBI" id="CHEBI:57841"/>
        <dbReference type="ChEBI" id="CHEBI:62890"/>
        <dbReference type="EC" id="2.5.1.3"/>
    </reaction>
</comment>
<comment type="catalytic activity">
    <reaction>
        <text>4-methyl-5-(2-phosphooxyethyl)-thiazole + 4-amino-2-methyl-5-(diphosphooxymethyl)pyrimidine + H(+) = thiamine phosphate + diphosphate</text>
        <dbReference type="Rhea" id="RHEA:22328"/>
        <dbReference type="ChEBI" id="CHEBI:15378"/>
        <dbReference type="ChEBI" id="CHEBI:33019"/>
        <dbReference type="ChEBI" id="CHEBI:37575"/>
        <dbReference type="ChEBI" id="CHEBI:57841"/>
        <dbReference type="ChEBI" id="CHEBI:58296"/>
        <dbReference type="EC" id="2.5.1.3"/>
    </reaction>
</comment>
<comment type="cofactor">
    <cofactor evidence="1">
        <name>Mg(2+)</name>
        <dbReference type="ChEBI" id="CHEBI:18420"/>
    </cofactor>
    <text evidence="1">Binds 1 Mg(2+) ion per subunit.</text>
</comment>
<comment type="pathway">
    <text>Cofactor biosynthesis; thiamine diphosphate biosynthesis; thiamine phosphate from 4-amino-2-methyl-5-diphosphomethylpyrimidine and 4-methyl-5-(2-phosphoethyl)-thiazole: step 1/1.</text>
</comment>
<comment type="similarity">
    <text evidence="2">Belongs to the thiamine-phosphate synthase family.</text>
</comment>
<gene>
    <name type="primary">thiE</name>
    <name type="ordered locus">RB6331</name>
</gene>
<accession>Q7UQH1</accession>
<reference key="1">
    <citation type="journal article" date="2003" name="Proc. Natl. Acad. Sci. U.S.A.">
        <title>Complete genome sequence of the marine planctomycete Pirellula sp. strain 1.</title>
        <authorList>
            <person name="Gloeckner F.O."/>
            <person name="Kube M."/>
            <person name="Bauer M."/>
            <person name="Teeling H."/>
            <person name="Lombardot T."/>
            <person name="Ludwig W."/>
            <person name="Gade D."/>
            <person name="Beck A."/>
            <person name="Borzym K."/>
            <person name="Heitmann K."/>
            <person name="Rabus R."/>
            <person name="Schlesner H."/>
            <person name="Amann R."/>
            <person name="Reinhardt R."/>
        </authorList>
    </citation>
    <scope>NUCLEOTIDE SEQUENCE [LARGE SCALE GENOMIC DNA]</scope>
    <source>
        <strain>DSM 10527 / NCIMB 13988 / SH1</strain>
    </source>
</reference>
<organism>
    <name type="scientific">Rhodopirellula baltica (strain DSM 10527 / NCIMB 13988 / SH1)</name>
    <dbReference type="NCBI Taxonomy" id="243090"/>
    <lineage>
        <taxon>Bacteria</taxon>
        <taxon>Pseudomonadati</taxon>
        <taxon>Planctomycetota</taxon>
        <taxon>Planctomycetia</taxon>
        <taxon>Pirellulales</taxon>
        <taxon>Pirellulaceae</taxon>
        <taxon>Rhodopirellula</taxon>
    </lineage>
</organism>
<sequence length="375" mass="40704">MTNAESRTVLRILDANANRAGEGLRTLEESARFILNDLSLTERLKTHRHDLAVAMRRWNRFQLIGSRDTPGDVGTGVQTASEQSRADLSSVIAAATTRTQQALRCLEEYGKTADSEFAACIESIRYQCYATFRELELKMAGLNARSRKLVEARLYALIACEPNADYLKARIAELVDAGVDVIQLRDSSVDDRTLFEQAKLGAAIAAERDVLWIINDRADIAVASGADGVHVGQEELPVDAVREVVGPERLIGLSTHSIEQVRLATRTTANYIGCGPTFPGKTKSFDRYPGCEFLTQVSDAERSGELTLPAFAIGGIGLGNVEQVAQSGIGRVAVTGALAPHDGLHQTAMGMREILERVPLRITPDSSDVCPLPND</sequence>
<dbReference type="EC" id="2.5.1.3"/>
<dbReference type="EMBL" id="BX294143">
    <property type="protein sequence ID" value="CAD74732.1"/>
    <property type="molecule type" value="Genomic_DNA"/>
</dbReference>
<dbReference type="RefSeq" id="NP_867187.1">
    <property type="nucleotide sequence ID" value="NC_005027.1"/>
</dbReference>
<dbReference type="RefSeq" id="WP_011120858.1">
    <property type="nucleotide sequence ID" value="NC_005027.1"/>
</dbReference>
<dbReference type="SMR" id="Q7UQH1"/>
<dbReference type="STRING" id="243090.RB6331"/>
<dbReference type="EnsemblBacteria" id="CAD74732">
    <property type="protein sequence ID" value="CAD74732"/>
    <property type="gene ID" value="RB6331"/>
</dbReference>
<dbReference type="KEGG" id="rba:RB6331"/>
<dbReference type="PATRIC" id="fig|243090.15.peg.3052"/>
<dbReference type="eggNOG" id="COG0352">
    <property type="taxonomic scope" value="Bacteria"/>
</dbReference>
<dbReference type="HOGENOM" id="CLU_064900_0_0_0"/>
<dbReference type="InParanoid" id="Q7UQH1"/>
<dbReference type="OrthoDB" id="9812206at2"/>
<dbReference type="UniPathway" id="UPA00060">
    <property type="reaction ID" value="UER00141"/>
</dbReference>
<dbReference type="Proteomes" id="UP000001025">
    <property type="component" value="Chromosome"/>
</dbReference>
<dbReference type="GO" id="GO:0005737">
    <property type="term" value="C:cytoplasm"/>
    <property type="evidence" value="ECO:0000318"/>
    <property type="project" value="GO_Central"/>
</dbReference>
<dbReference type="GO" id="GO:0000287">
    <property type="term" value="F:magnesium ion binding"/>
    <property type="evidence" value="ECO:0007669"/>
    <property type="project" value="UniProtKB-UniRule"/>
</dbReference>
<dbReference type="GO" id="GO:0004789">
    <property type="term" value="F:thiamine-phosphate diphosphorylase activity"/>
    <property type="evidence" value="ECO:0000318"/>
    <property type="project" value="GO_Central"/>
</dbReference>
<dbReference type="GO" id="GO:0009228">
    <property type="term" value="P:thiamine biosynthetic process"/>
    <property type="evidence" value="ECO:0000318"/>
    <property type="project" value="GO_Central"/>
</dbReference>
<dbReference type="GO" id="GO:0009229">
    <property type="term" value="P:thiamine diphosphate biosynthetic process"/>
    <property type="evidence" value="ECO:0007669"/>
    <property type="project" value="UniProtKB-UniRule"/>
</dbReference>
<dbReference type="CDD" id="cd00564">
    <property type="entry name" value="TMP_TenI"/>
    <property type="match status" value="1"/>
</dbReference>
<dbReference type="FunFam" id="3.20.20.70:FF:000096">
    <property type="entry name" value="Thiamine-phosphate synthase"/>
    <property type="match status" value="1"/>
</dbReference>
<dbReference type="Gene3D" id="3.20.20.70">
    <property type="entry name" value="Aldolase class I"/>
    <property type="match status" value="1"/>
</dbReference>
<dbReference type="HAMAP" id="MF_00097">
    <property type="entry name" value="TMP_synthase"/>
    <property type="match status" value="1"/>
</dbReference>
<dbReference type="InterPro" id="IPR013785">
    <property type="entry name" value="Aldolase_TIM"/>
</dbReference>
<dbReference type="InterPro" id="IPR036206">
    <property type="entry name" value="ThiamineP_synth_sf"/>
</dbReference>
<dbReference type="InterPro" id="IPR022998">
    <property type="entry name" value="ThiamineP_synth_TenI"/>
</dbReference>
<dbReference type="InterPro" id="IPR041397">
    <property type="entry name" value="ThiD2"/>
</dbReference>
<dbReference type="InterPro" id="IPR034291">
    <property type="entry name" value="TMP_synthase"/>
</dbReference>
<dbReference type="InterPro" id="IPR016229">
    <property type="entry name" value="TMP_synthase_cyanobac_bac"/>
</dbReference>
<dbReference type="NCBIfam" id="NF002727">
    <property type="entry name" value="PRK02615.1"/>
    <property type="match status" value="1"/>
</dbReference>
<dbReference type="NCBIfam" id="TIGR00693">
    <property type="entry name" value="thiE"/>
    <property type="match status" value="1"/>
</dbReference>
<dbReference type="PANTHER" id="PTHR20857">
    <property type="entry name" value="THIAMINE-PHOSPHATE PYROPHOSPHORYLASE"/>
    <property type="match status" value="1"/>
</dbReference>
<dbReference type="PANTHER" id="PTHR20857:SF15">
    <property type="entry name" value="THIAMINE-PHOSPHATE SYNTHASE"/>
    <property type="match status" value="1"/>
</dbReference>
<dbReference type="Pfam" id="PF17792">
    <property type="entry name" value="ThiD2"/>
    <property type="match status" value="1"/>
</dbReference>
<dbReference type="Pfam" id="PF02581">
    <property type="entry name" value="TMP-TENI"/>
    <property type="match status" value="1"/>
</dbReference>
<dbReference type="PIRSF" id="PIRSF000512">
    <property type="entry name" value="TMP_PPase_Cyanobac_prd"/>
    <property type="match status" value="1"/>
</dbReference>
<dbReference type="SUPFAM" id="SSF51391">
    <property type="entry name" value="Thiamin phosphate synthase"/>
    <property type="match status" value="1"/>
</dbReference>
<proteinExistence type="inferred from homology"/>
<name>THIE_RHOBA</name>
<keyword id="KW-0460">Magnesium</keyword>
<keyword id="KW-0479">Metal-binding</keyword>
<keyword id="KW-1185">Reference proteome</keyword>
<keyword id="KW-0784">Thiamine biosynthesis</keyword>
<keyword id="KW-0808">Transferase</keyword>
<evidence type="ECO:0000250" key="1"/>
<evidence type="ECO:0000305" key="2"/>
<feature type="chain" id="PRO_0000157083" description="Thiamine-phosphate synthase">
    <location>
        <begin position="1"/>
        <end position="375"/>
    </location>
</feature>
<feature type="region of interest" description="Unknown">
    <location>
        <begin position="1"/>
        <end position="127"/>
    </location>
</feature>
<feature type="region of interest" description="Thiamine-phosphate synthase">
    <location>
        <begin position="128"/>
        <end position="375"/>
    </location>
</feature>
<feature type="binding site" evidence="1">
    <location>
        <begin position="183"/>
        <end position="185"/>
    </location>
    <ligand>
        <name>4-amino-2-methyl-5-(diphosphooxymethyl)pyrimidine</name>
        <dbReference type="ChEBI" id="CHEBI:57841"/>
    </ligand>
</feature>
<feature type="binding site" evidence="1">
    <location>
        <position position="215"/>
    </location>
    <ligand>
        <name>4-amino-2-methyl-5-(diphosphooxymethyl)pyrimidine</name>
        <dbReference type="ChEBI" id="CHEBI:57841"/>
    </ligand>
</feature>
<feature type="binding site" evidence="1">
    <location>
        <position position="216"/>
    </location>
    <ligand>
        <name>Mg(2+)</name>
        <dbReference type="ChEBI" id="CHEBI:18420"/>
    </ligand>
</feature>
<feature type="binding site" evidence="1">
    <location>
        <position position="235"/>
    </location>
    <ligand>
        <name>Mg(2+)</name>
        <dbReference type="ChEBI" id="CHEBI:18420"/>
    </ligand>
</feature>
<feature type="binding site" evidence="1">
    <location>
        <position position="254"/>
    </location>
    <ligand>
        <name>4-amino-2-methyl-5-(diphosphooxymethyl)pyrimidine</name>
        <dbReference type="ChEBI" id="CHEBI:57841"/>
    </ligand>
</feature>
<feature type="binding site" evidence="1">
    <location>
        <position position="283"/>
    </location>
    <ligand>
        <name>4-amino-2-methyl-5-(diphosphooxymethyl)pyrimidine</name>
        <dbReference type="ChEBI" id="CHEBI:57841"/>
    </ligand>
</feature>
<feature type="binding site" evidence="1">
    <location>
        <position position="315"/>
    </location>
    <ligand>
        <name>2-[(2R,5Z)-2-carboxy-4-methylthiazol-5(2H)-ylidene]ethyl phosphate</name>
        <dbReference type="ChEBI" id="CHEBI:62899"/>
    </ligand>
</feature>
<protein>
    <recommendedName>
        <fullName>Thiamine-phosphate synthase</fullName>
        <shortName>TP synthase</shortName>
        <shortName>TPS</shortName>
        <ecNumber>2.5.1.3</ecNumber>
    </recommendedName>
    <alternativeName>
        <fullName>Thiamine-phosphate pyrophosphorylase</fullName>
        <shortName>TMP pyrophosphorylase</shortName>
        <shortName>TMP-PPase</shortName>
    </alternativeName>
</protein>